<proteinExistence type="inferred from homology"/>
<evidence type="ECO:0000255" key="1">
    <source>
        <dbReference type="HAMAP-Rule" id="MF_00127"/>
    </source>
</evidence>
<dbReference type="EC" id="6.1.1.21" evidence="1"/>
<dbReference type="EMBL" id="CP000948">
    <property type="protein sequence ID" value="ACB03666.1"/>
    <property type="molecule type" value="Genomic_DNA"/>
</dbReference>
<dbReference type="RefSeq" id="WP_001107167.1">
    <property type="nucleotide sequence ID" value="NC_010473.1"/>
</dbReference>
<dbReference type="SMR" id="B1XAY9"/>
<dbReference type="GeneID" id="75206207"/>
<dbReference type="KEGG" id="ecd:ECDH10B_2680"/>
<dbReference type="HOGENOM" id="CLU_025113_1_1_6"/>
<dbReference type="GO" id="GO:0005737">
    <property type="term" value="C:cytoplasm"/>
    <property type="evidence" value="ECO:0007669"/>
    <property type="project" value="UniProtKB-SubCell"/>
</dbReference>
<dbReference type="GO" id="GO:0005524">
    <property type="term" value="F:ATP binding"/>
    <property type="evidence" value="ECO:0007669"/>
    <property type="project" value="UniProtKB-UniRule"/>
</dbReference>
<dbReference type="GO" id="GO:0004821">
    <property type="term" value="F:histidine-tRNA ligase activity"/>
    <property type="evidence" value="ECO:0007669"/>
    <property type="project" value="UniProtKB-UniRule"/>
</dbReference>
<dbReference type="GO" id="GO:0006427">
    <property type="term" value="P:histidyl-tRNA aminoacylation"/>
    <property type="evidence" value="ECO:0007669"/>
    <property type="project" value="UniProtKB-UniRule"/>
</dbReference>
<dbReference type="CDD" id="cd00773">
    <property type="entry name" value="HisRS-like_core"/>
    <property type="match status" value="1"/>
</dbReference>
<dbReference type="CDD" id="cd00859">
    <property type="entry name" value="HisRS_anticodon"/>
    <property type="match status" value="1"/>
</dbReference>
<dbReference type="FunFam" id="3.30.930.10:FF:000005">
    <property type="entry name" value="Histidine--tRNA ligase"/>
    <property type="match status" value="1"/>
</dbReference>
<dbReference type="FunFam" id="3.40.50.800:FF:000007">
    <property type="entry name" value="Histidine--tRNA ligase"/>
    <property type="match status" value="1"/>
</dbReference>
<dbReference type="Gene3D" id="3.40.50.800">
    <property type="entry name" value="Anticodon-binding domain"/>
    <property type="match status" value="1"/>
</dbReference>
<dbReference type="Gene3D" id="3.30.930.10">
    <property type="entry name" value="Bira Bifunctional Protein, Domain 2"/>
    <property type="match status" value="1"/>
</dbReference>
<dbReference type="HAMAP" id="MF_00127">
    <property type="entry name" value="His_tRNA_synth"/>
    <property type="match status" value="1"/>
</dbReference>
<dbReference type="InterPro" id="IPR006195">
    <property type="entry name" value="aa-tRNA-synth_II"/>
</dbReference>
<dbReference type="InterPro" id="IPR045864">
    <property type="entry name" value="aa-tRNA-synth_II/BPL/LPL"/>
</dbReference>
<dbReference type="InterPro" id="IPR004154">
    <property type="entry name" value="Anticodon-bd"/>
</dbReference>
<dbReference type="InterPro" id="IPR036621">
    <property type="entry name" value="Anticodon-bd_dom_sf"/>
</dbReference>
<dbReference type="InterPro" id="IPR015807">
    <property type="entry name" value="His-tRNA-ligase"/>
</dbReference>
<dbReference type="InterPro" id="IPR041715">
    <property type="entry name" value="HisRS-like_core"/>
</dbReference>
<dbReference type="InterPro" id="IPR004516">
    <property type="entry name" value="HisRS/HisZ"/>
</dbReference>
<dbReference type="InterPro" id="IPR033656">
    <property type="entry name" value="HisRS_anticodon"/>
</dbReference>
<dbReference type="NCBIfam" id="TIGR00442">
    <property type="entry name" value="hisS"/>
    <property type="match status" value="1"/>
</dbReference>
<dbReference type="PANTHER" id="PTHR43707:SF1">
    <property type="entry name" value="HISTIDINE--TRNA LIGASE, MITOCHONDRIAL-RELATED"/>
    <property type="match status" value="1"/>
</dbReference>
<dbReference type="PANTHER" id="PTHR43707">
    <property type="entry name" value="HISTIDYL-TRNA SYNTHETASE"/>
    <property type="match status" value="1"/>
</dbReference>
<dbReference type="Pfam" id="PF03129">
    <property type="entry name" value="HGTP_anticodon"/>
    <property type="match status" value="1"/>
</dbReference>
<dbReference type="Pfam" id="PF13393">
    <property type="entry name" value="tRNA-synt_His"/>
    <property type="match status" value="1"/>
</dbReference>
<dbReference type="PIRSF" id="PIRSF001549">
    <property type="entry name" value="His-tRNA_synth"/>
    <property type="match status" value="1"/>
</dbReference>
<dbReference type="SUPFAM" id="SSF52954">
    <property type="entry name" value="Class II aaRS ABD-related"/>
    <property type="match status" value="1"/>
</dbReference>
<dbReference type="SUPFAM" id="SSF55681">
    <property type="entry name" value="Class II aaRS and biotin synthetases"/>
    <property type="match status" value="1"/>
</dbReference>
<dbReference type="PROSITE" id="PS50862">
    <property type="entry name" value="AA_TRNA_LIGASE_II"/>
    <property type="match status" value="1"/>
</dbReference>
<name>SYH_ECODH</name>
<sequence>MAKNIQAIRGMNDYLPGETAIWQRIEGTLKNVLGSYGYSEIRLPIVEQTPLFKRAIGEVTDVVEKEMYTFEDRNGDSLTLRPEGTAGCVRAGIEHGLLYNQEQRLWYIGPMFRHERPQKGRYRQFHQLGCEVFGLQGPDIDAELIMLTARWWRALGISEHVTLELNSIGSLEARANYRDALVAFLEQHKEKLDEDCKRRMYTNPLRVLDSKNPEVQALLNDAPALGDYLDEESREHFAGLCKLLESAGIAYTVNQRLVRGLDYYNRTVFEWVTNSLGSQGTVCAGGRYDGLVEQLGGRATPAVGFAMGLERLVLLVQAVNPEFKADPVVDIYLVASGADTQSAAMALAERLRDELPGVKLMTNHGGGNFKKQFARADKWGARVAVVLGESEVANGTAVVKDLRSGEQTAVAQDSVAAHLRTLLG</sequence>
<organism>
    <name type="scientific">Escherichia coli (strain K12 / DH10B)</name>
    <dbReference type="NCBI Taxonomy" id="316385"/>
    <lineage>
        <taxon>Bacteria</taxon>
        <taxon>Pseudomonadati</taxon>
        <taxon>Pseudomonadota</taxon>
        <taxon>Gammaproteobacteria</taxon>
        <taxon>Enterobacterales</taxon>
        <taxon>Enterobacteriaceae</taxon>
        <taxon>Escherichia</taxon>
    </lineage>
</organism>
<keyword id="KW-0030">Aminoacyl-tRNA synthetase</keyword>
<keyword id="KW-0067">ATP-binding</keyword>
<keyword id="KW-0963">Cytoplasm</keyword>
<keyword id="KW-0436">Ligase</keyword>
<keyword id="KW-0547">Nucleotide-binding</keyword>
<keyword id="KW-0648">Protein biosynthesis</keyword>
<gene>
    <name evidence="1" type="primary">hisS</name>
    <name type="ordered locus">ECDH10B_2680</name>
</gene>
<feature type="chain" id="PRO_1000095552" description="Histidine--tRNA ligase">
    <location>
        <begin position="1"/>
        <end position="424"/>
    </location>
</feature>
<accession>B1XAY9</accession>
<comment type="catalytic activity">
    <reaction evidence="1">
        <text>tRNA(His) + L-histidine + ATP = L-histidyl-tRNA(His) + AMP + diphosphate + H(+)</text>
        <dbReference type="Rhea" id="RHEA:17313"/>
        <dbReference type="Rhea" id="RHEA-COMP:9665"/>
        <dbReference type="Rhea" id="RHEA-COMP:9689"/>
        <dbReference type="ChEBI" id="CHEBI:15378"/>
        <dbReference type="ChEBI" id="CHEBI:30616"/>
        <dbReference type="ChEBI" id="CHEBI:33019"/>
        <dbReference type="ChEBI" id="CHEBI:57595"/>
        <dbReference type="ChEBI" id="CHEBI:78442"/>
        <dbReference type="ChEBI" id="CHEBI:78527"/>
        <dbReference type="ChEBI" id="CHEBI:456215"/>
        <dbReference type="EC" id="6.1.1.21"/>
    </reaction>
</comment>
<comment type="subunit">
    <text evidence="1">Homodimer.</text>
</comment>
<comment type="subcellular location">
    <subcellularLocation>
        <location evidence="1">Cytoplasm</location>
    </subcellularLocation>
</comment>
<comment type="similarity">
    <text evidence="1">Belongs to the class-II aminoacyl-tRNA synthetase family.</text>
</comment>
<reference key="1">
    <citation type="journal article" date="2008" name="J. Bacteriol.">
        <title>The complete genome sequence of Escherichia coli DH10B: insights into the biology of a laboratory workhorse.</title>
        <authorList>
            <person name="Durfee T."/>
            <person name="Nelson R."/>
            <person name="Baldwin S."/>
            <person name="Plunkett G. III"/>
            <person name="Burland V."/>
            <person name="Mau B."/>
            <person name="Petrosino J.F."/>
            <person name="Qin X."/>
            <person name="Muzny D.M."/>
            <person name="Ayele M."/>
            <person name="Gibbs R.A."/>
            <person name="Csorgo B."/>
            <person name="Posfai G."/>
            <person name="Weinstock G.M."/>
            <person name="Blattner F.R."/>
        </authorList>
    </citation>
    <scope>NUCLEOTIDE SEQUENCE [LARGE SCALE GENOMIC DNA]</scope>
    <source>
        <strain>K12 / DH10B</strain>
    </source>
</reference>
<protein>
    <recommendedName>
        <fullName evidence="1">Histidine--tRNA ligase</fullName>
        <ecNumber evidence="1">6.1.1.21</ecNumber>
    </recommendedName>
    <alternativeName>
        <fullName evidence="1">Histidyl-tRNA synthetase</fullName>
        <shortName evidence="1">HisRS</shortName>
    </alternativeName>
</protein>